<accession>C7T1P1</accession>
<keyword id="KW-1015">Disulfide bond</keyword>
<keyword id="KW-0960">Knottin</keyword>
<keyword id="KW-0964">Secreted</keyword>
<keyword id="KW-0800">Toxin</keyword>
<name>O16I_CONEA</name>
<gene>
    <name type="primary">E1</name>
</gene>
<reference key="1">
    <citation type="journal article" date="2009" name="PLoS ONE">
        <title>Geographic variation in venom allelic composition and diets of the widespread predatory marine gastropod Conus ebraeus.</title>
        <authorList>
            <person name="Duda T.F. Jr."/>
            <person name="Chang D."/>
            <person name="Lewis B.D."/>
            <person name="Lee T."/>
        </authorList>
    </citation>
    <scope>NUCLEOTIDE SEQUENCE [GENOMIC DNA]</scope>
    <source>
        <strain>Okinawa</strain>
        <tissue>Foot</tissue>
    </source>
</reference>
<protein>
    <recommendedName>
        <fullName>Conotoxin Eb6.18</fullName>
    </recommendedName>
</protein>
<organism>
    <name type="scientific">Conus ebraeus</name>
    <name type="common">Hebrew cone</name>
    <dbReference type="NCBI Taxonomy" id="89425"/>
    <lineage>
        <taxon>Eukaryota</taxon>
        <taxon>Metazoa</taxon>
        <taxon>Spiralia</taxon>
        <taxon>Lophotrochozoa</taxon>
        <taxon>Mollusca</taxon>
        <taxon>Gastropoda</taxon>
        <taxon>Caenogastropoda</taxon>
        <taxon>Neogastropoda</taxon>
        <taxon>Conoidea</taxon>
        <taxon>Conidae</taxon>
        <taxon>Conus</taxon>
        <taxon>Virroconus</taxon>
    </lineage>
</organism>
<comment type="subcellular location">
    <subcellularLocation>
        <location evidence="1">Secreted</location>
    </subcellularLocation>
</comment>
<comment type="tissue specificity">
    <text>Expressed by the venom duct.</text>
</comment>
<comment type="domain">
    <text evidence="1">The presence of a 'disulfide through disulfide knot' structurally defines this protein as a knottin.</text>
</comment>
<comment type="domain">
    <text>The cysteine framework is VI/VII (C-C-CC-C-C).</text>
</comment>
<comment type="miscellaneous">
    <text>This peptide corresponds to allele E1i. Has not been merged with other alleles since they may differ due to geographic variation (see strain in PubMed:19606224).</text>
</comment>
<comment type="similarity">
    <text evidence="2">Belongs to the conotoxin O1 superfamily.</text>
</comment>
<sequence length="26" mass="2795">TRSGGACNSHDQCCINFCRKATSTCM</sequence>
<dbReference type="EMBL" id="FJ834433">
    <property type="protein sequence ID" value="ACU56812.1"/>
    <property type="molecule type" value="Genomic_DNA"/>
</dbReference>
<dbReference type="SMR" id="C7T1P1"/>
<dbReference type="ConoServer" id="3840">
    <property type="toxin name" value="Eb6.18 (partial)"/>
</dbReference>
<dbReference type="GO" id="GO:0005576">
    <property type="term" value="C:extracellular region"/>
    <property type="evidence" value="ECO:0007669"/>
    <property type="project" value="UniProtKB-SubCell"/>
</dbReference>
<dbReference type="GO" id="GO:0090729">
    <property type="term" value="F:toxin activity"/>
    <property type="evidence" value="ECO:0007669"/>
    <property type="project" value="UniProtKB-KW"/>
</dbReference>
<proteinExistence type="evidence at transcript level"/>
<feature type="peptide" id="PRO_0000414643" description="Conotoxin Eb6.18">
    <location>
        <begin position="1" status="less than"/>
        <end position="26"/>
    </location>
</feature>
<feature type="disulfide bond" evidence="1">
    <location>
        <begin position="7"/>
        <end position="18"/>
    </location>
</feature>
<feature type="disulfide bond" evidence="1">
    <location>
        <begin position="13"/>
        <end position="25"/>
    </location>
</feature>
<feature type="disulfide bond" evidence="1">
    <location>
        <begin status="unknown"/>
        <end position="14"/>
    </location>
</feature>
<feature type="non-terminal residue">
    <location>
        <position position="1"/>
    </location>
</feature>
<evidence type="ECO:0000250" key="1"/>
<evidence type="ECO:0000305" key="2"/>